<accession>B1JR11</accession>
<keyword id="KW-0343">GTPase activation</keyword>
<keyword id="KW-0690">Ribosome biogenesis</keyword>
<dbReference type="EMBL" id="CP000950">
    <property type="protein sequence ID" value="ACA70452.1"/>
    <property type="molecule type" value="Genomic_DNA"/>
</dbReference>
<dbReference type="RefSeq" id="WP_012304783.1">
    <property type="nucleotide sequence ID" value="NZ_CP009792.1"/>
</dbReference>
<dbReference type="SMR" id="B1JR11"/>
<dbReference type="KEGG" id="ypy:YPK_4193"/>
<dbReference type="PATRIC" id="fig|502800.11.peg.546"/>
<dbReference type="GO" id="GO:0005096">
    <property type="term" value="F:GTPase activator activity"/>
    <property type="evidence" value="ECO:0007669"/>
    <property type="project" value="UniProtKB-KW"/>
</dbReference>
<dbReference type="GO" id="GO:0042254">
    <property type="term" value="P:ribosome biogenesis"/>
    <property type="evidence" value="ECO:0007669"/>
    <property type="project" value="UniProtKB-KW"/>
</dbReference>
<dbReference type="HAMAP" id="MF_01058">
    <property type="entry name" value="GAP_YihI"/>
    <property type="match status" value="1"/>
</dbReference>
<dbReference type="InterPro" id="IPR007336">
    <property type="entry name" value="YihI"/>
</dbReference>
<dbReference type="NCBIfam" id="NF003560">
    <property type="entry name" value="PRK05244.1-1"/>
    <property type="match status" value="1"/>
</dbReference>
<dbReference type="Pfam" id="PF04220">
    <property type="entry name" value="YihI"/>
    <property type="match status" value="1"/>
</dbReference>
<proteinExistence type="inferred from homology"/>
<sequence length="188" mass="21334">MKQPNKAPRANIAAPKGTATPKRRRKTRDELDAEARDRKRQKKHSGNRSGARTNVEGSNKKGHSQTQEKDPRVGSKVPVPLVIESQVKAKSMPKPVENNVVKPRLTPEEELAKLENDERLDALLDRLDNDEVLNKEDQAYVDLTLDRIDALMEQLGIELGDDEDDVEREEKQEDILQLLKRGNPKDTF</sequence>
<evidence type="ECO:0000255" key="1">
    <source>
        <dbReference type="HAMAP-Rule" id="MF_01058"/>
    </source>
</evidence>
<evidence type="ECO:0000256" key="2">
    <source>
        <dbReference type="SAM" id="MobiDB-lite"/>
    </source>
</evidence>
<feature type="chain" id="PRO_1000136398" description="Der GTPase-activating protein YihI">
    <location>
        <begin position="1"/>
        <end position="188"/>
    </location>
</feature>
<feature type="region of interest" description="Disordered" evidence="2">
    <location>
        <begin position="1"/>
        <end position="80"/>
    </location>
</feature>
<feature type="region of interest" description="Disordered" evidence="2">
    <location>
        <begin position="162"/>
        <end position="188"/>
    </location>
</feature>
<feature type="compositionally biased region" description="Basic and acidic residues" evidence="2">
    <location>
        <begin position="27"/>
        <end position="37"/>
    </location>
</feature>
<feature type="compositionally biased region" description="Polar residues" evidence="2">
    <location>
        <begin position="47"/>
        <end position="57"/>
    </location>
</feature>
<comment type="function">
    <text evidence="1">A GTPase-activating protein (GAP) that modifies Der/EngA GTPase function. May play a role in ribosome biogenesis.</text>
</comment>
<comment type="subunit">
    <text evidence="1">Interacts with Der.</text>
</comment>
<comment type="similarity">
    <text evidence="1">Belongs to the YihI family.</text>
</comment>
<protein>
    <recommendedName>
        <fullName evidence="1">Der GTPase-activating protein YihI</fullName>
    </recommendedName>
</protein>
<organism>
    <name type="scientific">Yersinia pseudotuberculosis serotype O:3 (strain YPIII)</name>
    <dbReference type="NCBI Taxonomy" id="502800"/>
    <lineage>
        <taxon>Bacteria</taxon>
        <taxon>Pseudomonadati</taxon>
        <taxon>Pseudomonadota</taxon>
        <taxon>Gammaproteobacteria</taxon>
        <taxon>Enterobacterales</taxon>
        <taxon>Yersiniaceae</taxon>
        <taxon>Yersinia</taxon>
    </lineage>
</organism>
<gene>
    <name evidence="1" type="primary">yihI</name>
    <name type="ordered locus">YPK_4193</name>
</gene>
<reference key="1">
    <citation type="submission" date="2008-02" db="EMBL/GenBank/DDBJ databases">
        <title>Complete sequence of Yersinia pseudotuberculosis YPIII.</title>
        <authorList>
            <consortium name="US DOE Joint Genome Institute"/>
            <person name="Copeland A."/>
            <person name="Lucas S."/>
            <person name="Lapidus A."/>
            <person name="Glavina del Rio T."/>
            <person name="Dalin E."/>
            <person name="Tice H."/>
            <person name="Bruce D."/>
            <person name="Goodwin L."/>
            <person name="Pitluck S."/>
            <person name="Munk A.C."/>
            <person name="Brettin T."/>
            <person name="Detter J.C."/>
            <person name="Han C."/>
            <person name="Tapia R."/>
            <person name="Schmutz J."/>
            <person name="Larimer F."/>
            <person name="Land M."/>
            <person name="Hauser L."/>
            <person name="Challacombe J.F."/>
            <person name="Green L."/>
            <person name="Lindler L.E."/>
            <person name="Nikolich M.P."/>
            <person name="Richardson P."/>
        </authorList>
    </citation>
    <scope>NUCLEOTIDE SEQUENCE [LARGE SCALE GENOMIC DNA]</scope>
    <source>
        <strain>YPIII</strain>
    </source>
</reference>
<name>YIHI_YERPY</name>